<name>RS3_NAUPA</name>
<evidence type="ECO:0000255" key="1">
    <source>
        <dbReference type="HAMAP-Rule" id="MF_01309"/>
    </source>
</evidence>
<evidence type="ECO:0000256" key="2">
    <source>
        <dbReference type="SAM" id="MobiDB-lite"/>
    </source>
</evidence>
<evidence type="ECO:0000305" key="3"/>
<reference key="1">
    <citation type="journal article" date="2009" name="PLoS Genet.">
        <title>Adaptations to submarine hydrothermal environments exemplified by the genome of Nautilia profundicola.</title>
        <authorList>
            <person name="Campbell B.J."/>
            <person name="Smith J.L."/>
            <person name="Hanson T.E."/>
            <person name="Klotz M.G."/>
            <person name="Stein L.Y."/>
            <person name="Lee C.K."/>
            <person name="Wu D."/>
            <person name="Robinson J.M."/>
            <person name="Khouri H.M."/>
            <person name="Eisen J.A."/>
            <person name="Cary S.C."/>
        </authorList>
    </citation>
    <scope>NUCLEOTIDE SEQUENCE [LARGE SCALE GENOMIC DNA]</scope>
    <source>
        <strain>ATCC BAA-1463 / DSM 18972 / AmH</strain>
    </source>
</reference>
<comment type="function">
    <text evidence="1">Binds the lower part of the 30S subunit head. Binds mRNA in the 70S ribosome, positioning it for translation.</text>
</comment>
<comment type="subunit">
    <text evidence="1">Part of the 30S ribosomal subunit. Forms a tight complex with proteins S10 and S14.</text>
</comment>
<comment type="similarity">
    <text evidence="1">Belongs to the universal ribosomal protein uS3 family.</text>
</comment>
<sequence>MGQKTNPIGLRLGINKNWRSRWFINYNTMPENVLGDYELRKFLKKKLYYAGISDIIIERTAKKIRITIFAAKPGIIIGKGGSEIEALKAELQKRIGNKELILNIKEERKPQLSAQLAAENVATQIERRVAFRRAMKKVIQSALKSGAKGIKVQVAGRLNGAEMARTEWYLEGRVPLHTLRAKIDYGFAEALTTYGIIGVKVWIFKGEVLQRKMNSDDTATPERKAPRRRKGRRNVNAKKN</sequence>
<accession>B9L6M7</accession>
<dbReference type="EMBL" id="CP001279">
    <property type="protein sequence ID" value="ACM93147.1"/>
    <property type="molecule type" value="Genomic_DNA"/>
</dbReference>
<dbReference type="RefSeq" id="WP_015902199.1">
    <property type="nucleotide sequence ID" value="NC_012115.1"/>
</dbReference>
<dbReference type="SMR" id="B9L6M7"/>
<dbReference type="STRING" id="598659.NAMH_1635"/>
<dbReference type="KEGG" id="nam:NAMH_1635"/>
<dbReference type="eggNOG" id="COG0092">
    <property type="taxonomic scope" value="Bacteria"/>
</dbReference>
<dbReference type="HOGENOM" id="CLU_058591_0_2_7"/>
<dbReference type="OrthoDB" id="9806396at2"/>
<dbReference type="Proteomes" id="UP000000448">
    <property type="component" value="Chromosome"/>
</dbReference>
<dbReference type="GO" id="GO:0022627">
    <property type="term" value="C:cytosolic small ribosomal subunit"/>
    <property type="evidence" value="ECO:0007669"/>
    <property type="project" value="TreeGrafter"/>
</dbReference>
<dbReference type="GO" id="GO:0003729">
    <property type="term" value="F:mRNA binding"/>
    <property type="evidence" value="ECO:0007669"/>
    <property type="project" value="UniProtKB-UniRule"/>
</dbReference>
<dbReference type="GO" id="GO:0019843">
    <property type="term" value="F:rRNA binding"/>
    <property type="evidence" value="ECO:0007669"/>
    <property type="project" value="UniProtKB-UniRule"/>
</dbReference>
<dbReference type="GO" id="GO:0003735">
    <property type="term" value="F:structural constituent of ribosome"/>
    <property type="evidence" value="ECO:0007669"/>
    <property type="project" value="InterPro"/>
</dbReference>
<dbReference type="GO" id="GO:0006412">
    <property type="term" value="P:translation"/>
    <property type="evidence" value="ECO:0007669"/>
    <property type="project" value="UniProtKB-UniRule"/>
</dbReference>
<dbReference type="CDD" id="cd02412">
    <property type="entry name" value="KH-II_30S_S3"/>
    <property type="match status" value="1"/>
</dbReference>
<dbReference type="FunFam" id="3.30.1140.32:FF:000006">
    <property type="entry name" value="30S ribosomal protein S3"/>
    <property type="match status" value="1"/>
</dbReference>
<dbReference type="FunFam" id="3.30.300.20:FF:000001">
    <property type="entry name" value="30S ribosomal protein S3"/>
    <property type="match status" value="1"/>
</dbReference>
<dbReference type="Gene3D" id="3.30.300.20">
    <property type="match status" value="1"/>
</dbReference>
<dbReference type="Gene3D" id="3.30.1140.32">
    <property type="entry name" value="Ribosomal protein S3, C-terminal domain"/>
    <property type="match status" value="1"/>
</dbReference>
<dbReference type="HAMAP" id="MF_01309_B">
    <property type="entry name" value="Ribosomal_uS3_B"/>
    <property type="match status" value="1"/>
</dbReference>
<dbReference type="InterPro" id="IPR004087">
    <property type="entry name" value="KH_dom"/>
</dbReference>
<dbReference type="InterPro" id="IPR015946">
    <property type="entry name" value="KH_dom-like_a/b"/>
</dbReference>
<dbReference type="InterPro" id="IPR004044">
    <property type="entry name" value="KH_dom_type_2"/>
</dbReference>
<dbReference type="InterPro" id="IPR009019">
    <property type="entry name" value="KH_sf_prok-type"/>
</dbReference>
<dbReference type="InterPro" id="IPR036419">
    <property type="entry name" value="Ribosomal_S3_C_sf"/>
</dbReference>
<dbReference type="InterPro" id="IPR005704">
    <property type="entry name" value="Ribosomal_uS3_bac-typ"/>
</dbReference>
<dbReference type="InterPro" id="IPR001351">
    <property type="entry name" value="Ribosomal_uS3_C"/>
</dbReference>
<dbReference type="InterPro" id="IPR018280">
    <property type="entry name" value="Ribosomal_uS3_CS"/>
</dbReference>
<dbReference type="NCBIfam" id="TIGR01009">
    <property type="entry name" value="rpsC_bact"/>
    <property type="match status" value="1"/>
</dbReference>
<dbReference type="PANTHER" id="PTHR11760">
    <property type="entry name" value="30S/40S RIBOSOMAL PROTEIN S3"/>
    <property type="match status" value="1"/>
</dbReference>
<dbReference type="PANTHER" id="PTHR11760:SF19">
    <property type="entry name" value="SMALL RIBOSOMAL SUBUNIT PROTEIN US3C"/>
    <property type="match status" value="1"/>
</dbReference>
<dbReference type="Pfam" id="PF07650">
    <property type="entry name" value="KH_2"/>
    <property type="match status" value="1"/>
</dbReference>
<dbReference type="Pfam" id="PF00189">
    <property type="entry name" value="Ribosomal_S3_C"/>
    <property type="match status" value="1"/>
</dbReference>
<dbReference type="SMART" id="SM00322">
    <property type="entry name" value="KH"/>
    <property type="match status" value="1"/>
</dbReference>
<dbReference type="SUPFAM" id="SSF54814">
    <property type="entry name" value="Prokaryotic type KH domain (KH-domain type II)"/>
    <property type="match status" value="1"/>
</dbReference>
<dbReference type="SUPFAM" id="SSF54821">
    <property type="entry name" value="Ribosomal protein S3 C-terminal domain"/>
    <property type="match status" value="1"/>
</dbReference>
<dbReference type="PROSITE" id="PS50823">
    <property type="entry name" value="KH_TYPE_2"/>
    <property type="match status" value="1"/>
</dbReference>
<dbReference type="PROSITE" id="PS00548">
    <property type="entry name" value="RIBOSOMAL_S3"/>
    <property type="match status" value="1"/>
</dbReference>
<proteinExistence type="inferred from homology"/>
<organism>
    <name type="scientific">Nautilia profundicola (strain ATCC BAA-1463 / DSM 18972 / AmH)</name>
    <dbReference type="NCBI Taxonomy" id="598659"/>
    <lineage>
        <taxon>Bacteria</taxon>
        <taxon>Pseudomonadati</taxon>
        <taxon>Campylobacterota</taxon>
        <taxon>Epsilonproteobacteria</taxon>
        <taxon>Nautiliales</taxon>
        <taxon>Nautiliaceae</taxon>
        <taxon>Nautilia</taxon>
    </lineage>
</organism>
<keyword id="KW-0687">Ribonucleoprotein</keyword>
<keyword id="KW-0689">Ribosomal protein</keyword>
<keyword id="KW-0694">RNA-binding</keyword>
<keyword id="KW-0699">rRNA-binding</keyword>
<gene>
    <name evidence="1" type="primary">rpsC</name>
    <name type="ordered locus">NAMH_1635</name>
</gene>
<feature type="chain" id="PRO_1000165503" description="Small ribosomal subunit protein uS3">
    <location>
        <begin position="1"/>
        <end position="240"/>
    </location>
</feature>
<feature type="domain" description="KH type-2" evidence="1">
    <location>
        <begin position="39"/>
        <end position="108"/>
    </location>
</feature>
<feature type="region of interest" description="Disordered" evidence="2">
    <location>
        <begin position="213"/>
        <end position="240"/>
    </location>
</feature>
<feature type="compositionally biased region" description="Basic and acidic residues" evidence="2">
    <location>
        <begin position="213"/>
        <end position="224"/>
    </location>
</feature>
<feature type="compositionally biased region" description="Basic residues" evidence="2">
    <location>
        <begin position="225"/>
        <end position="240"/>
    </location>
</feature>
<protein>
    <recommendedName>
        <fullName evidence="1">Small ribosomal subunit protein uS3</fullName>
    </recommendedName>
    <alternativeName>
        <fullName evidence="3">30S ribosomal protein S3</fullName>
    </alternativeName>
</protein>